<dbReference type="EMBL" id="CP000542">
    <property type="protein sequence ID" value="ABM56266.1"/>
    <property type="molecule type" value="Genomic_DNA"/>
</dbReference>
<dbReference type="RefSeq" id="WP_011808282.1">
    <property type="nucleotide sequence ID" value="NC_008786.1"/>
</dbReference>
<dbReference type="SMR" id="A1WF59"/>
<dbReference type="STRING" id="391735.Veis_0481"/>
<dbReference type="GeneID" id="76459191"/>
<dbReference type="KEGG" id="vei:Veis_0481"/>
<dbReference type="eggNOG" id="COG0355">
    <property type="taxonomic scope" value="Bacteria"/>
</dbReference>
<dbReference type="HOGENOM" id="CLU_084338_2_0_4"/>
<dbReference type="OrthoDB" id="9791445at2"/>
<dbReference type="Proteomes" id="UP000000374">
    <property type="component" value="Chromosome"/>
</dbReference>
<dbReference type="GO" id="GO:0005886">
    <property type="term" value="C:plasma membrane"/>
    <property type="evidence" value="ECO:0007669"/>
    <property type="project" value="UniProtKB-SubCell"/>
</dbReference>
<dbReference type="GO" id="GO:0045259">
    <property type="term" value="C:proton-transporting ATP synthase complex"/>
    <property type="evidence" value="ECO:0007669"/>
    <property type="project" value="UniProtKB-KW"/>
</dbReference>
<dbReference type="GO" id="GO:0005524">
    <property type="term" value="F:ATP binding"/>
    <property type="evidence" value="ECO:0007669"/>
    <property type="project" value="UniProtKB-UniRule"/>
</dbReference>
<dbReference type="GO" id="GO:0046933">
    <property type="term" value="F:proton-transporting ATP synthase activity, rotational mechanism"/>
    <property type="evidence" value="ECO:0007669"/>
    <property type="project" value="UniProtKB-UniRule"/>
</dbReference>
<dbReference type="CDD" id="cd12152">
    <property type="entry name" value="F1-ATPase_delta"/>
    <property type="match status" value="1"/>
</dbReference>
<dbReference type="FunFam" id="2.60.15.10:FF:000001">
    <property type="entry name" value="ATP synthase epsilon chain"/>
    <property type="match status" value="1"/>
</dbReference>
<dbReference type="Gene3D" id="1.20.5.440">
    <property type="entry name" value="ATP synthase delta/epsilon subunit, C-terminal domain"/>
    <property type="match status" value="1"/>
</dbReference>
<dbReference type="Gene3D" id="2.60.15.10">
    <property type="entry name" value="F0F1 ATP synthase delta/epsilon subunit, N-terminal"/>
    <property type="match status" value="1"/>
</dbReference>
<dbReference type="HAMAP" id="MF_00530">
    <property type="entry name" value="ATP_synth_epsil_bac"/>
    <property type="match status" value="1"/>
</dbReference>
<dbReference type="InterPro" id="IPR036794">
    <property type="entry name" value="ATP_F1_dsu/esu_C_sf"/>
</dbReference>
<dbReference type="InterPro" id="IPR001469">
    <property type="entry name" value="ATP_synth_F1_dsu/esu"/>
</dbReference>
<dbReference type="InterPro" id="IPR020546">
    <property type="entry name" value="ATP_synth_F1_dsu/esu_N"/>
</dbReference>
<dbReference type="InterPro" id="IPR020547">
    <property type="entry name" value="ATP_synth_F1_esu_C"/>
</dbReference>
<dbReference type="InterPro" id="IPR036771">
    <property type="entry name" value="ATPsynth_dsu/esu_N"/>
</dbReference>
<dbReference type="NCBIfam" id="TIGR01216">
    <property type="entry name" value="ATP_synt_epsi"/>
    <property type="match status" value="1"/>
</dbReference>
<dbReference type="NCBIfam" id="NF001847">
    <property type="entry name" value="PRK00571.1-4"/>
    <property type="match status" value="1"/>
</dbReference>
<dbReference type="PANTHER" id="PTHR13822">
    <property type="entry name" value="ATP SYNTHASE DELTA/EPSILON CHAIN"/>
    <property type="match status" value="1"/>
</dbReference>
<dbReference type="PANTHER" id="PTHR13822:SF10">
    <property type="entry name" value="ATP SYNTHASE EPSILON CHAIN, CHLOROPLASTIC"/>
    <property type="match status" value="1"/>
</dbReference>
<dbReference type="Pfam" id="PF00401">
    <property type="entry name" value="ATP-synt_DE"/>
    <property type="match status" value="1"/>
</dbReference>
<dbReference type="Pfam" id="PF02823">
    <property type="entry name" value="ATP-synt_DE_N"/>
    <property type="match status" value="1"/>
</dbReference>
<dbReference type="SUPFAM" id="SSF46604">
    <property type="entry name" value="Epsilon subunit of F1F0-ATP synthase C-terminal domain"/>
    <property type="match status" value="1"/>
</dbReference>
<dbReference type="SUPFAM" id="SSF51344">
    <property type="entry name" value="Epsilon subunit of F1F0-ATP synthase N-terminal domain"/>
    <property type="match status" value="1"/>
</dbReference>
<comment type="function">
    <text evidence="1">Produces ATP from ADP in the presence of a proton gradient across the membrane.</text>
</comment>
<comment type="subunit">
    <text evidence="1">F-type ATPases have 2 components, CF(1) - the catalytic core - and CF(0) - the membrane proton channel. CF(1) has five subunits: alpha(3), beta(3), gamma(1), delta(1), epsilon(1). CF(0) has three main subunits: a, b and c.</text>
</comment>
<comment type="subcellular location">
    <subcellularLocation>
        <location evidence="1">Cell inner membrane</location>
        <topology evidence="1">Peripheral membrane protein</topology>
    </subcellularLocation>
</comment>
<comment type="similarity">
    <text evidence="1">Belongs to the ATPase epsilon chain family.</text>
</comment>
<organism>
    <name type="scientific">Verminephrobacter eiseniae (strain EF01-2)</name>
    <dbReference type="NCBI Taxonomy" id="391735"/>
    <lineage>
        <taxon>Bacteria</taxon>
        <taxon>Pseudomonadati</taxon>
        <taxon>Pseudomonadota</taxon>
        <taxon>Betaproteobacteria</taxon>
        <taxon>Burkholderiales</taxon>
        <taxon>Comamonadaceae</taxon>
        <taxon>Verminephrobacter</taxon>
    </lineage>
</organism>
<sequence length="138" mass="14784">MNTIHVDVVSAEESIFTGQARFVALPGEVGELGIYPRHAPLITRIKPGSVRIEMADGSEEFVFVAGGLLEVQPHCVTVLSDTAIRGKDLDDEKANAAKAAAEEALKNAKSDLDLAKAQSELAVMAAQIAALRKFRQKK</sequence>
<reference key="1">
    <citation type="submission" date="2006-12" db="EMBL/GenBank/DDBJ databases">
        <title>Complete sequence of chromosome 1 of Verminephrobacter eiseniae EF01-2.</title>
        <authorList>
            <person name="Copeland A."/>
            <person name="Lucas S."/>
            <person name="Lapidus A."/>
            <person name="Barry K."/>
            <person name="Detter J.C."/>
            <person name="Glavina del Rio T."/>
            <person name="Dalin E."/>
            <person name="Tice H."/>
            <person name="Pitluck S."/>
            <person name="Chertkov O."/>
            <person name="Brettin T."/>
            <person name="Bruce D."/>
            <person name="Han C."/>
            <person name="Tapia R."/>
            <person name="Gilna P."/>
            <person name="Schmutz J."/>
            <person name="Larimer F."/>
            <person name="Land M."/>
            <person name="Hauser L."/>
            <person name="Kyrpides N."/>
            <person name="Kim E."/>
            <person name="Stahl D."/>
            <person name="Richardson P."/>
        </authorList>
    </citation>
    <scope>NUCLEOTIDE SEQUENCE [LARGE SCALE GENOMIC DNA]</scope>
    <source>
        <strain>EF01-2</strain>
    </source>
</reference>
<protein>
    <recommendedName>
        <fullName evidence="1">ATP synthase epsilon chain</fullName>
    </recommendedName>
    <alternativeName>
        <fullName evidence="1">ATP synthase F1 sector epsilon subunit</fullName>
    </alternativeName>
    <alternativeName>
        <fullName evidence="1">F-ATPase epsilon subunit</fullName>
    </alternativeName>
</protein>
<name>ATPE_VEREI</name>
<evidence type="ECO:0000255" key="1">
    <source>
        <dbReference type="HAMAP-Rule" id="MF_00530"/>
    </source>
</evidence>
<gene>
    <name evidence="1" type="primary">atpC</name>
    <name type="ordered locus">Veis_0481</name>
</gene>
<feature type="chain" id="PRO_1000056549" description="ATP synthase epsilon chain">
    <location>
        <begin position="1"/>
        <end position="138"/>
    </location>
</feature>
<accession>A1WF59</accession>
<keyword id="KW-0066">ATP synthesis</keyword>
<keyword id="KW-0997">Cell inner membrane</keyword>
<keyword id="KW-1003">Cell membrane</keyword>
<keyword id="KW-0139">CF(1)</keyword>
<keyword id="KW-0375">Hydrogen ion transport</keyword>
<keyword id="KW-0406">Ion transport</keyword>
<keyword id="KW-0472">Membrane</keyword>
<keyword id="KW-1185">Reference proteome</keyword>
<keyword id="KW-0813">Transport</keyword>
<proteinExistence type="inferred from homology"/>